<name>RL10_VIBCM</name>
<protein>
    <recommendedName>
        <fullName evidence="1">Large ribosomal subunit protein uL10</fullName>
    </recommendedName>
    <alternativeName>
        <fullName evidence="2">50S ribosomal protein L10</fullName>
    </alternativeName>
</protein>
<feature type="chain" id="PRO_1000195575" description="Large ribosomal subunit protein uL10">
    <location>
        <begin position="1"/>
        <end position="162"/>
    </location>
</feature>
<reference key="1">
    <citation type="journal article" date="2008" name="PLoS ONE">
        <title>A recalibrated molecular clock and independent origins for the cholera pandemic clones.</title>
        <authorList>
            <person name="Feng L."/>
            <person name="Reeves P.R."/>
            <person name="Lan R."/>
            <person name="Ren Y."/>
            <person name="Gao C."/>
            <person name="Zhou Z."/>
            <person name="Ren Y."/>
            <person name="Cheng J."/>
            <person name="Wang W."/>
            <person name="Wang J."/>
            <person name="Qian W."/>
            <person name="Li D."/>
            <person name="Wang L."/>
        </authorList>
    </citation>
    <scope>NUCLEOTIDE SEQUENCE [LARGE SCALE GENOMIC DNA]</scope>
    <source>
        <strain>M66-2</strain>
    </source>
</reference>
<accession>C3LR58</accession>
<organism>
    <name type="scientific">Vibrio cholerae serotype O1 (strain M66-2)</name>
    <dbReference type="NCBI Taxonomy" id="579112"/>
    <lineage>
        <taxon>Bacteria</taxon>
        <taxon>Pseudomonadati</taxon>
        <taxon>Pseudomonadota</taxon>
        <taxon>Gammaproteobacteria</taxon>
        <taxon>Vibrionales</taxon>
        <taxon>Vibrionaceae</taxon>
        <taxon>Vibrio</taxon>
    </lineage>
</organism>
<comment type="function">
    <text evidence="1">Forms part of the ribosomal stalk, playing a central role in the interaction of the ribosome with GTP-bound translation factors.</text>
</comment>
<comment type="subunit">
    <text evidence="1">Part of the ribosomal stalk of the 50S ribosomal subunit. The N-terminus interacts with L11 and the large rRNA to form the base of the stalk. The C-terminus forms an elongated spine to which L12 dimers bind in a sequential fashion forming a multimeric L10(L12)X complex.</text>
</comment>
<comment type="similarity">
    <text evidence="1">Belongs to the universal ribosomal protein uL10 family.</text>
</comment>
<gene>
    <name evidence="1" type="primary">rplJ</name>
    <name type="ordered locus">VCM66_0310</name>
</gene>
<sequence>MALNLQDKKAIVAEVNEAASGALSAVVADSRGVQVAAMTNLRKQAREAGVYLKVVRNTLARRAVEGTAYECLKDVFVGPTLIGFSNEHPGAAARLFKDFAKENKAFEIKAAAFEGVLTDPEVLATLPTYDEAIARLMMCMKEASAGKLVRTIAAVRDQKEAA</sequence>
<evidence type="ECO:0000255" key="1">
    <source>
        <dbReference type="HAMAP-Rule" id="MF_00362"/>
    </source>
</evidence>
<evidence type="ECO:0000305" key="2"/>
<proteinExistence type="inferred from homology"/>
<keyword id="KW-0687">Ribonucleoprotein</keyword>
<keyword id="KW-0689">Ribosomal protein</keyword>
<keyword id="KW-0694">RNA-binding</keyword>
<keyword id="KW-0699">rRNA-binding</keyword>
<dbReference type="EMBL" id="CP001233">
    <property type="protein sequence ID" value="ACP04638.1"/>
    <property type="molecule type" value="Genomic_DNA"/>
</dbReference>
<dbReference type="RefSeq" id="WP_001207198.1">
    <property type="nucleotide sequence ID" value="NC_012578.1"/>
</dbReference>
<dbReference type="GeneID" id="94014902"/>
<dbReference type="KEGG" id="vcm:VCM66_0310"/>
<dbReference type="HOGENOM" id="CLU_092227_0_2_6"/>
<dbReference type="Proteomes" id="UP000001217">
    <property type="component" value="Chromosome I"/>
</dbReference>
<dbReference type="GO" id="GO:0015934">
    <property type="term" value="C:large ribosomal subunit"/>
    <property type="evidence" value="ECO:0007669"/>
    <property type="project" value="InterPro"/>
</dbReference>
<dbReference type="GO" id="GO:0070180">
    <property type="term" value="F:large ribosomal subunit rRNA binding"/>
    <property type="evidence" value="ECO:0007669"/>
    <property type="project" value="UniProtKB-UniRule"/>
</dbReference>
<dbReference type="GO" id="GO:0003735">
    <property type="term" value="F:structural constituent of ribosome"/>
    <property type="evidence" value="ECO:0007669"/>
    <property type="project" value="InterPro"/>
</dbReference>
<dbReference type="GO" id="GO:0006412">
    <property type="term" value="P:translation"/>
    <property type="evidence" value="ECO:0007669"/>
    <property type="project" value="UniProtKB-UniRule"/>
</dbReference>
<dbReference type="CDD" id="cd05797">
    <property type="entry name" value="Ribosomal_L10"/>
    <property type="match status" value="1"/>
</dbReference>
<dbReference type="FunFam" id="3.30.70.1730:FF:000001">
    <property type="entry name" value="50S ribosomal protein L10"/>
    <property type="match status" value="1"/>
</dbReference>
<dbReference type="Gene3D" id="3.30.70.1730">
    <property type="match status" value="1"/>
</dbReference>
<dbReference type="Gene3D" id="6.10.250.2350">
    <property type="match status" value="1"/>
</dbReference>
<dbReference type="HAMAP" id="MF_00362">
    <property type="entry name" value="Ribosomal_uL10"/>
    <property type="match status" value="1"/>
</dbReference>
<dbReference type="InterPro" id="IPR001790">
    <property type="entry name" value="Ribosomal_uL10"/>
</dbReference>
<dbReference type="InterPro" id="IPR043141">
    <property type="entry name" value="Ribosomal_uL10-like_sf"/>
</dbReference>
<dbReference type="InterPro" id="IPR022973">
    <property type="entry name" value="Ribosomal_uL10_bac"/>
</dbReference>
<dbReference type="InterPro" id="IPR047865">
    <property type="entry name" value="Ribosomal_uL10_bac_type"/>
</dbReference>
<dbReference type="InterPro" id="IPR002363">
    <property type="entry name" value="Ribosomal_uL10_CS_bac"/>
</dbReference>
<dbReference type="NCBIfam" id="NF000955">
    <property type="entry name" value="PRK00099.1-1"/>
    <property type="match status" value="1"/>
</dbReference>
<dbReference type="PANTHER" id="PTHR11560">
    <property type="entry name" value="39S RIBOSOMAL PROTEIN L10, MITOCHONDRIAL"/>
    <property type="match status" value="1"/>
</dbReference>
<dbReference type="Pfam" id="PF00466">
    <property type="entry name" value="Ribosomal_L10"/>
    <property type="match status" value="1"/>
</dbReference>
<dbReference type="SUPFAM" id="SSF160369">
    <property type="entry name" value="Ribosomal protein L10-like"/>
    <property type="match status" value="1"/>
</dbReference>
<dbReference type="PROSITE" id="PS01109">
    <property type="entry name" value="RIBOSOMAL_L10"/>
    <property type="match status" value="1"/>
</dbReference>